<evidence type="ECO:0000255" key="1">
    <source>
        <dbReference type="HAMAP-Rule" id="MF_00600"/>
    </source>
</evidence>
<comment type="function">
    <text evidence="1">Together with its co-chaperonin GroES, plays an essential role in assisting protein folding. The GroEL-GroES system forms a nano-cage that allows encapsulation of the non-native substrate proteins and provides a physical environment optimized to promote and accelerate protein folding.</text>
</comment>
<comment type="catalytic activity">
    <reaction evidence="1">
        <text>ATP + H2O + a folded polypeptide = ADP + phosphate + an unfolded polypeptide.</text>
        <dbReference type="EC" id="5.6.1.7"/>
    </reaction>
</comment>
<comment type="subunit">
    <text evidence="1">Forms a cylinder of 14 subunits composed of two heptameric rings stacked back-to-back. Interacts with the co-chaperonin GroES.</text>
</comment>
<comment type="subcellular location">
    <subcellularLocation>
        <location evidence="1">Cytoplasm</location>
    </subcellularLocation>
</comment>
<comment type="similarity">
    <text evidence="1">Belongs to the chaperonin (HSP60) family.</text>
</comment>
<dbReference type="EC" id="5.6.1.7" evidence="1"/>
<dbReference type="EMBL" id="CP000249">
    <property type="protein sequence ID" value="ABD11545.1"/>
    <property type="molecule type" value="Genomic_DNA"/>
</dbReference>
<dbReference type="SMR" id="Q2JAZ7"/>
<dbReference type="STRING" id="106370.Francci3_2175"/>
<dbReference type="KEGG" id="fra:Francci3_2175"/>
<dbReference type="eggNOG" id="COG0459">
    <property type="taxonomic scope" value="Bacteria"/>
</dbReference>
<dbReference type="HOGENOM" id="CLU_016503_3_0_11"/>
<dbReference type="OrthoDB" id="9766614at2"/>
<dbReference type="PhylomeDB" id="Q2JAZ7"/>
<dbReference type="Proteomes" id="UP000001937">
    <property type="component" value="Chromosome"/>
</dbReference>
<dbReference type="GO" id="GO:0005737">
    <property type="term" value="C:cytoplasm"/>
    <property type="evidence" value="ECO:0007669"/>
    <property type="project" value="UniProtKB-SubCell"/>
</dbReference>
<dbReference type="GO" id="GO:0005524">
    <property type="term" value="F:ATP binding"/>
    <property type="evidence" value="ECO:0007669"/>
    <property type="project" value="UniProtKB-UniRule"/>
</dbReference>
<dbReference type="GO" id="GO:0140662">
    <property type="term" value="F:ATP-dependent protein folding chaperone"/>
    <property type="evidence" value="ECO:0007669"/>
    <property type="project" value="InterPro"/>
</dbReference>
<dbReference type="GO" id="GO:0016853">
    <property type="term" value="F:isomerase activity"/>
    <property type="evidence" value="ECO:0007669"/>
    <property type="project" value="UniProtKB-KW"/>
</dbReference>
<dbReference type="GO" id="GO:0051082">
    <property type="term" value="F:unfolded protein binding"/>
    <property type="evidence" value="ECO:0007669"/>
    <property type="project" value="UniProtKB-UniRule"/>
</dbReference>
<dbReference type="GO" id="GO:0042026">
    <property type="term" value="P:protein refolding"/>
    <property type="evidence" value="ECO:0007669"/>
    <property type="project" value="UniProtKB-UniRule"/>
</dbReference>
<dbReference type="CDD" id="cd03344">
    <property type="entry name" value="GroEL"/>
    <property type="match status" value="1"/>
</dbReference>
<dbReference type="FunFam" id="3.50.7.10:FF:000001">
    <property type="entry name" value="60 kDa chaperonin"/>
    <property type="match status" value="1"/>
</dbReference>
<dbReference type="Gene3D" id="3.50.7.10">
    <property type="entry name" value="GroEL"/>
    <property type="match status" value="1"/>
</dbReference>
<dbReference type="Gene3D" id="1.10.560.10">
    <property type="entry name" value="GroEL-like equatorial domain"/>
    <property type="match status" value="1"/>
</dbReference>
<dbReference type="Gene3D" id="3.30.260.10">
    <property type="entry name" value="TCP-1-like chaperonin intermediate domain"/>
    <property type="match status" value="1"/>
</dbReference>
<dbReference type="HAMAP" id="MF_00600">
    <property type="entry name" value="CH60"/>
    <property type="match status" value="1"/>
</dbReference>
<dbReference type="InterPro" id="IPR018370">
    <property type="entry name" value="Chaperonin_Cpn60_CS"/>
</dbReference>
<dbReference type="InterPro" id="IPR001844">
    <property type="entry name" value="Cpn60/GroEL"/>
</dbReference>
<dbReference type="InterPro" id="IPR002423">
    <property type="entry name" value="Cpn60/GroEL/TCP-1"/>
</dbReference>
<dbReference type="InterPro" id="IPR027409">
    <property type="entry name" value="GroEL-like_apical_dom_sf"/>
</dbReference>
<dbReference type="InterPro" id="IPR027413">
    <property type="entry name" value="GROEL-like_equatorial_sf"/>
</dbReference>
<dbReference type="InterPro" id="IPR027410">
    <property type="entry name" value="TCP-1-like_intermed_sf"/>
</dbReference>
<dbReference type="NCBIfam" id="TIGR02348">
    <property type="entry name" value="GroEL"/>
    <property type="match status" value="1"/>
</dbReference>
<dbReference type="NCBIfam" id="NF000592">
    <property type="entry name" value="PRK00013.1"/>
    <property type="match status" value="1"/>
</dbReference>
<dbReference type="NCBIfam" id="NF009487">
    <property type="entry name" value="PRK12849.1"/>
    <property type="match status" value="1"/>
</dbReference>
<dbReference type="NCBIfam" id="NF009488">
    <property type="entry name" value="PRK12850.1"/>
    <property type="match status" value="1"/>
</dbReference>
<dbReference type="NCBIfam" id="NF009489">
    <property type="entry name" value="PRK12851.1"/>
    <property type="match status" value="1"/>
</dbReference>
<dbReference type="PANTHER" id="PTHR45633">
    <property type="entry name" value="60 KDA HEAT SHOCK PROTEIN, MITOCHONDRIAL"/>
    <property type="match status" value="1"/>
</dbReference>
<dbReference type="Pfam" id="PF00118">
    <property type="entry name" value="Cpn60_TCP1"/>
    <property type="match status" value="1"/>
</dbReference>
<dbReference type="PRINTS" id="PR00298">
    <property type="entry name" value="CHAPERONIN60"/>
</dbReference>
<dbReference type="SUPFAM" id="SSF52029">
    <property type="entry name" value="GroEL apical domain-like"/>
    <property type="match status" value="1"/>
</dbReference>
<dbReference type="SUPFAM" id="SSF48592">
    <property type="entry name" value="GroEL equatorial domain-like"/>
    <property type="match status" value="1"/>
</dbReference>
<dbReference type="SUPFAM" id="SSF54849">
    <property type="entry name" value="GroEL-intermediate domain like"/>
    <property type="match status" value="1"/>
</dbReference>
<dbReference type="PROSITE" id="PS00296">
    <property type="entry name" value="CHAPERONINS_CPN60"/>
    <property type="match status" value="1"/>
</dbReference>
<protein>
    <recommendedName>
        <fullName evidence="1">Chaperonin GroEL 2</fullName>
        <ecNumber evidence="1">5.6.1.7</ecNumber>
    </recommendedName>
    <alternativeName>
        <fullName evidence="1">60 kDa chaperonin 2</fullName>
    </alternativeName>
    <alternativeName>
        <fullName evidence="1">Chaperonin-60 2</fullName>
        <shortName evidence="1">Cpn60 2</shortName>
    </alternativeName>
</protein>
<accession>Q2JAZ7</accession>
<feature type="chain" id="PRO_0000256912" description="Chaperonin GroEL 2">
    <location>
        <begin position="1"/>
        <end position="541"/>
    </location>
</feature>
<feature type="binding site" evidence="1">
    <location>
        <begin position="29"/>
        <end position="32"/>
    </location>
    <ligand>
        <name>ATP</name>
        <dbReference type="ChEBI" id="CHEBI:30616"/>
    </ligand>
</feature>
<feature type="binding site" evidence="1">
    <location>
        <begin position="86"/>
        <end position="90"/>
    </location>
    <ligand>
        <name>ATP</name>
        <dbReference type="ChEBI" id="CHEBI:30616"/>
    </ligand>
</feature>
<feature type="binding site" evidence="1">
    <location>
        <position position="414"/>
    </location>
    <ligand>
        <name>ATP</name>
        <dbReference type="ChEBI" id="CHEBI:30616"/>
    </ligand>
</feature>
<feature type="binding site" evidence="1">
    <location>
        <begin position="478"/>
        <end position="480"/>
    </location>
    <ligand>
        <name>ATP</name>
        <dbReference type="ChEBI" id="CHEBI:30616"/>
    </ligand>
</feature>
<feature type="binding site" evidence="1">
    <location>
        <position position="494"/>
    </location>
    <ligand>
        <name>ATP</name>
        <dbReference type="ChEBI" id="CHEBI:30616"/>
    </ligand>
</feature>
<name>CH602_FRACC</name>
<reference key="1">
    <citation type="journal article" date="2007" name="Genome Res.">
        <title>Genome characteristics of facultatively symbiotic Frankia sp. strains reflect host range and host plant biogeography.</title>
        <authorList>
            <person name="Normand P."/>
            <person name="Lapierre P."/>
            <person name="Tisa L.S."/>
            <person name="Gogarten J.P."/>
            <person name="Alloisio N."/>
            <person name="Bagnarol E."/>
            <person name="Bassi C.A."/>
            <person name="Berry A.M."/>
            <person name="Bickhart D.M."/>
            <person name="Choisne N."/>
            <person name="Couloux A."/>
            <person name="Cournoyer B."/>
            <person name="Cruveiller S."/>
            <person name="Daubin V."/>
            <person name="Demange N."/>
            <person name="Francino M.P."/>
            <person name="Goltsman E."/>
            <person name="Huang Y."/>
            <person name="Kopp O.R."/>
            <person name="Labarre L."/>
            <person name="Lapidus A."/>
            <person name="Lavire C."/>
            <person name="Marechal J."/>
            <person name="Martinez M."/>
            <person name="Mastronunzio J.E."/>
            <person name="Mullin B.C."/>
            <person name="Niemann J."/>
            <person name="Pujic P."/>
            <person name="Rawnsley T."/>
            <person name="Rouy Z."/>
            <person name="Schenowitz C."/>
            <person name="Sellstedt A."/>
            <person name="Tavares F."/>
            <person name="Tomkins J.P."/>
            <person name="Vallenet D."/>
            <person name="Valverde C."/>
            <person name="Wall L.G."/>
            <person name="Wang Y."/>
            <person name="Medigue C."/>
            <person name="Benson D.R."/>
        </authorList>
    </citation>
    <scope>NUCLEOTIDE SEQUENCE [LARGE SCALE GENOMIC DNA]</scope>
    <source>
        <strain>DSM 45818 / CECT 9043 / HFP020203 / CcI3</strain>
    </source>
</reference>
<gene>
    <name evidence="1" type="primary">groEL2</name>
    <name evidence="1" type="synonym">groL2</name>
    <name type="ordered locus">Francci3_2175</name>
</gene>
<proteinExistence type="inferred from homology"/>
<keyword id="KW-0067">ATP-binding</keyword>
<keyword id="KW-0143">Chaperone</keyword>
<keyword id="KW-0963">Cytoplasm</keyword>
<keyword id="KW-0413">Isomerase</keyword>
<keyword id="KW-0547">Nucleotide-binding</keyword>
<keyword id="KW-1185">Reference proteome</keyword>
<organism>
    <name type="scientific">Frankia casuarinae (strain DSM 45818 / CECT 9043 / HFP020203 / CcI3)</name>
    <dbReference type="NCBI Taxonomy" id="106370"/>
    <lineage>
        <taxon>Bacteria</taxon>
        <taxon>Bacillati</taxon>
        <taxon>Actinomycetota</taxon>
        <taxon>Actinomycetes</taxon>
        <taxon>Frankiales</taxon>
        <taxon>Frankiaceae</taxon>
        <taxon>Frankia</taxon>
    </lineage>
</organism>
<sequence>MPKIIAYEEEARRGLERGMNQLAGAVKVTLGPKGRNVVLEKKWGVPAITNDGVSIAREIELEDPYEKIGAEMVKEVAKKTDEVAGDGTTTATVLAEALVHEGLRNVAAGANPIALKRGIELAVERVCGELANLSRELETKDQIASTASISAGGDTAIGQIIAEAMDKVGRDGVITVEESNTFGLELELTEGMRFDKGYISPYFITDQERMECVLEDPYILVANIKISLVKDLLPLLEKVMQAGRPLLVIAENVEGEALATLVVNKIRGTFRSVAVKAPGFGERRKAMLGDIAVLTGSQVISEEVGLRLENADLDLLGRARKVVVTKDDTTIIEGAGDPGRIAGRVSQIRSEIEKSDSDYDREKLQERLARLAGGVAVIKAGAATEVELKERKHRIEDAVRNAKAAVEEGIVPGGGVALLLASGAVFDGLEVAEDERTGAEMVRRALTEPLRQIAVNAGLEGGVVVEKVRNLQPGWGLDAATGEHVNMLEAGIIDPTKVTRSALQNAASIAGLFLTTEAVVAEKPEEKETAAAPAGGGGLEY</sequence>